<name>UBIG_HAHCH</name>
<organism>
    <name type="scientific">Hahella chejuensis (strain KCTC 2396)</name>
    <dbReference type="NCBI Taxonomy" id="349521"/>
    <lineage>
        <taxon>Bacteria</taxon>
        <taxon>Pseudomonadati</taxon>
        <taxon>Pseudomonadota</taxon>
        <taxon>Gammaproteobacteria</taxon>
        <taxon>Oceanospirillales</taxon>
        <taxon>Hahellaceae</taxon>
        <taxon>Hahella</taxon>
    </lineage>
</organism>
<comment type="function">
    <text evidence="1">O-methyltransferase that catalyzes the 2 O-methylation steps in the ubiquinone biosynthetic pathway.</text>
</comment>
<comment type="catalytic activity">
    <reaction evidence="1">
        <text>a 3-demethylubiquinol + S-adenosyl-L-methionine = a ubiquinol + S-adenosyl-L-homocysteine + H(+)</text>
        <dbReference type="Rhea" id="RHEA:44380"/>
        <dbReference type="Rhea" id="RHEA-COMP:9566"/>
        <dbReference type="Rhea" id="RHEA-COMP:10914"/>
        <dbReference type="ChEBI" id="CHEBI:15378"/>
        <dbReference type="ChEBI" id="CHEBI:17976"/>
        <dbReference type="ChEBI" id="CHEBI:57856"/>
        <dbReference type="ChEBI" id="CHEBI:59789"/>
        <dbReference type="ChEBI" id="CHEBI:84422"/>
        <dbReference type="EC" id="2.1.1.64"/>
    </reaction>
</comment>
<comment type="catalytic activity">
    <reaction evidence="1">
        <text>a 3-(all-trans-polyprenyl)benzene-1,2-diol + S-adenosyl-L-methionine = a 2-methoxy-6-(all-trans-polyprenyl)phenol + S-adenosyl-L-homocysteine + H(+)</text>
        <dbReference type="Rhea" id="RHEA:31411"/>
        <dbReference type="Rhea" id="RHEA-COMP:9550"/>
        <dbReference type="Rhea" id="RHEA-COMP:9551"/>
        <dbReference type="ChEBI" id="CHEBI:15378"/>
        <dbReference type="ChEBI" id="CHEBI:57856"/>
        <dbReference type="ChEBI" id="CHEBI:59789"/>
        <dbReference type="ChEBI" id="CHEBI:62729"/>
        <dbReference type="ChEBI" id="CHEBI:62731"/>
        <dbReference type="EC" id="2.1.1.222"/>
    </reaction>
</comment>
<comment type="pathway">
    <text evidence="1">Cofactor biosynthesis; ubiquinone biosynthesis.</text>
</comment>
<comment type="similarity">
    <text evidence="1">Belongs to the methyltransferase superfamily. UbiG/COQ3 family.</text>
</comment>
<keyword id="KW-0489">Methyltransferase</keyword>
<keyword id="KW-1185">Reference proteome</keyword>
<keyword id="KW-0949">S-adenosyl-L-methionine</keyword>
<keyword id="KW-0808">Transferase</keyword>
<keyword id="KW-0831">Ubiquinone biosynthesis</keyword>
<accession>Q2SE61</accession>
<evidence type="ECO:0000255" key="1">
    <source>
        <dbReference type="HAMAP-Rule" id="MF_00472"/>
    </source>
</evidence>
<reference key="1">
    <citation type="journal article" date="2005" name="Nucleic Acids Res.">
        <title>Genomic blueprint of Hahella chejuensis, a marine microbe producing an algicidal agent.</title>
        <authorList>
            <person name="Jeong H."/>
            <person name="Yim J.H."/>
            <person name="Lee C."/>
            <person name="Choi S.-H."/>
            <person name="Park Y.K."/>
            <person name="Yoon S.H."/>
            <person name="Hur C.-G."/>
            <person name="Kang H.-Y."/>
            <person name="Kim D."/>
            <person name="Lee H.H."/>
            <person name="Park K.H."/>
            <person name="Park S.-H."/>
            <person name="Park H.-S."/>
            <person name="Lee H.K."/>
            <person name="Oh T.K."/>
            <person name="Kim J.F."/>
        </authorList>
    </citation>
    <scope>NUCLEOTIDE SEQUENCE [LARGE SCALE GENOMIC DNA]</scope>
    <source>
        <strain>KCTC 2396</strain>
    </source>
</reference>
<proteinExistence type="inferred from homology"/>
<feature type="chain" id="PRO_0000241709" description="Ubiquinone biosynthesis O-methyltransferase">
    <location>
        <begin position="1"/>
        <end position="238"/>
    </location>
</feature>
<feature type="binding site" evidence="1">
    <location>
        <position position="39"/>
    </location>
    <ligand>
        <name>S-adenosyl-L-methionine</name>
        <dbReference type="ChEBI" id="CHEBI:59789"/>
    </ligand>
</feature>
<feature type="binding site" evidence="1">
    <location>
        <position position="58"/>
    </location>
    <ligand>
        <name>S-adenosyl-L-methionine</name>
        <dbReference type="ChEBI" id="CHEBI:59789"/>
    </ligand>
</feature>
<feature type="binding site" evidence="1">
    <location>
        <position position="79"/>
    </location>
    <ligand>
        <name>S-adenosyl-L-methionine</name>
        <dbReference type="ChEBI" id="CHEBI:59789"/>
    </ligand>
</feature>
<feature type="binding site" evidence="1">
    <location>
        <position position="123"/>
    </location>
    <ligand>
        <name>S-adenosyl-L-methionine</name>
        <dbReference type="ChEBI" id="CHEBI:59789"/>
    </ligand>
</feature>
<protein>
    <recommendedName>
        <fullName evidence="1">Ubiquinone biosynthesis O-methyltransferase</fullName>
    </recommendedName>
    <alternativeName>
        <fullName evidence="1">2-polyprenyl-6-hydroxyphenol methylase</fullName>
        <ecNumber evidence="1">2.1.1.222</ecNumber>
    </alternativeName>
    <alternativeName>
        <fullName evidence="1">3-demethylubiquinone 3-O-methyltransferase</fullName>
        <ecNumber evidence="1">2.1.1.64</ecNumber>
    </alternativeName>
</protein>
<sequence>MTPVENVDLSEVKKFEDLAHRWWDAESEFKPLHEINPLRLDFIDERAALPGKRVLDVGCGGGILSESMARRGAHVVGIDMGEAPLSVARLHGLESGVSVDYRRTTIEELAEAEAESFDVVTCMEMLEHVPDPASVIAACARVAKPGADLFFSTINRNPKSFLFAIVGAEYVLKMLPRGTHEWKKFIKPSELAAWLRSADLDLCEMRGMTYNPLLKEYKLGDDVDVNYLMHAVKPLKDA</sequence>
<dbReference type="EC" id="2.1.1.222" evidence="1"/>
<dbReference type="EC" id="2.1.1.64" evidence="1"/>
<dbReference type="EMBL" id="CP000155">
    <property type="protein sequence ID" value="ABC31063.1"/>
    <property type="molecule type" value="Genomic_DNA"/>
</dbReference>
<dbReference type="RefSeq" id="WP_011398130.1">
    <property type="nucleotide sequence ID" value="NC_007645.1"/>
</dbReference>
<dbReference type="SMR" id="Q2SE61"/>
<dbReference type="STRING" id="349521.HCH_04357"/>
<dbReference type="KEGG" id="hch:HCH_04357"/>
<dbReference type="eggNOG" id="COG2227">
    <property type="taxonomic scope" value="Bacteria"/>
</dbReference>
<dbReference type="HOGENOM" id="CLU_042432_5_0_6"/>
<dbReference type="OrthoDB" id="9801538at2"/>
<dbReference type="UniPathway" id="UPA00232"/>
<dbReference type="Proteomes" id="UP000000238">
    <property type="component" value="Chromosome"/>
</dbReference>
<dbReference type="GO" id="GO:0102208">
    <property type="term" value="F:2-polyprenyl-6-hydroxyphenol methylase activity"/>
    <property type="evidence" value="ECO:0007669"/>
    <property type="project" value="UniProtKB-EC"/>
</dbReference>
<dbReference type="GO" id="GO:0061542">
    <property type="term" value="F:3-demethylubiquinol 3-O-methyltransferase activity"/>
    <property type="evidence" value="ECO:0007669"/>
    <property type="project" value="UniProtKB-UniRule"/>
</dbReference>
<dbReference type="GO" id="GO:0010420">
    <property type="term" value="F:polyprenyldihydroxybenzoate methyltransferase activity"/>
    <property type="evidence" value="ECO:0007669"/>
    <property type="project" value="InterPro"/>
</dbReference>
<dbReference type="GO" id="GO:0032259">
    <property type="term" value="P:methylation"/>
    <property type="evidence" value="ECO:0007669"/>
    <property type="project" value="UniProtKB-KW"/>
</dbReference>
<dbReference type="CDD" id="cd02440">
    <property type="entry name" value="AdoMet_MTases"/>
    <property type="match status" value="1"/>
</dbReference>
<dbReference type="FunFam" id="3.40.50.150:FF:000028">
    <property type="entry name" value="Ubiquinone biosynthesis O-methyltransferase"/>
    <property type="match status" value="1"/>
</dbReference>
<dbReference type="Gene3D" id="3.40.50.150">
    <property type="entry name" value="Vaccinia Virus protein VP39"/>
    <property type="match status" value="1"/>
</dbReference>
<dbReference type="HAMAP" id="MF_00472">
    <property type="entry name" value="UbiG"/>
    <property type="match status" value="1"/>
</dbReference>
<dbReference type="InterPro" id="IPR013216">
    <property type="entry name" value="Methyltransf_11"/>
</dbReference>
<dbReference type="InterPro" id="IPR029063">
    <property type="entry name" value="SAM-dependent_MTases_sf"/>
</dbReference>
<dbReference type="InterPro" id="IPR010233">
    <property type="entry name" value="UbiG_MeTrfase"/>
</dbReference>
<dbReference type="NCBIfam" id="TIGR01983">
    <property type="entry name" value="UbiG"/>
    <property type="match status" value="1"/>
</dbReference>
<dbReference type="PANTHER" id="PTHR43464">
    <property type="entry name" value="METHYLTRANSFERASE"/>
    <property type="match status" value="1"/>
</dbReference>
<dbReference type="PANTHER" id="PTHR43464:SF19">
    <property type="entry name" value="UBIQUINONE BIOSYNTHESIS O-METHYLTRANSFERASE, MITOCHONDRIAL"/>
    <property type="match status" value="1"/>
</dbReference>
<dbReference type="Pfam" id="PF08241">
    <property type="entry name" value="Methyltransf_11"/>
    <property type="match status" value="1"/>
</dbReference>
<dbReference type="SUPFAM" id="SSF53335">
    <property type="entry name" value="S-adenosyl-L-methionine-dependent methyltransferases"/>
    <property type="match status" value="1"/>
</dbReference>
<gene>
    <name evidence="1" type="primary">ubiG</name>
    <name type="ordered locus">HCH_04357</name>
</gene>